<protein>
    <recommendedName>
        <fullName evidence="1">tRNA modification GTPase MnmE</fullName>
        <ecNumber evidence="1">3.6.-.-</ecNumber>
    </recommendedName>
</protein>
<accession>Q7VQV3</accession>
<comment type="function">
    <text evidence="1">Exhibits a very high intrinsic GTPase hydrolysis rate. Involved in the addition of a carboxymethylaminomethyl (cmnm) group at the wobble position (U34) of certain tRNAs, forming tRNA-cmnm(5)s(2)U34.</text>
</comment>
<comment type="cofactor">
    <cofactor evidence="1">
        <name>K(+)</name>
        <dbReference type="ChEBI" id="CHEBI:29103"/>
    </cofactor>
    <text evidence="1">Binds 1 potassium ion per subunit.</text>
</comment>
<comment type="subunit">
    <text evidence="1">Homodimer. Heterotetramer of two MnmE and two MnmG subunits.</text>
</comment>
<comment type="subcellular location">
    <subcellularLocation>
        <location evidence="1">Cytoplasm</location>
    </subcellularLocation>
</comment>
<comment type="similarity">
    <text evidence="1">Belongs to the TRAFAC class TrmE-Era-EngA-EngB-Septin-like GTPase superfamily. TrmE GTPase family.</text>
</comment>
<organism>
    <name type="scientific">Blochmanniella floridana</name>
    <dbReference type="NCBI Taxonomy" id="203907"/>
    <lineage>
        <taxon>Bacteria</taxon>
        <taxon>Pseudomonadati</taxon>
        <taxon>Pseudomonadota</taxon>
        <taxon>Gammaproteobacteria</taxon>
        <taxon>Enterobacterales</taxon>
        <taxon>Enterobacteriaceae</taxon>
        <taxon>ant endosymbionts</taxon>
        <taxon>Candidatus Blochmanniella</taxon>
    </lineage>
</organism>
<dbReference type="EC" id="3.6.-.-" evidence="1"/>
<dbReference type="EMBL" id="BX248583">
    <property type="protein sequence ID" value="CAD83539.1"/>
    <property type="molecule type" value="Genomic_DNA"/>
</dbReference>
<dbReference type="SMR" id="Q7VQV3"/>
<dbReference type="STRING" id="203907.Bfl011"/>
<dbReference type="KEGG" id="bfl:Bfl011"/>
<dbReference type="eggNOG" id="COG0486">
    <property type="taxonomic scope" value="Bacteria"/>
</dbReference>
<dbReference type="HOGENOM" id="CLU_019624_4_1_6"/>
<dbReference type="OrthoDB" id="9805918at2"/>
<dbReference type="Proteomes" id="UP000002192">
    <property type="component" value="Chromosome"/>
</dbReference>
<dbReference type="GO" id="GO:0005829">
    <property type="term" value="C:cytosol"/>
    <property type="evidence" value="ECO:0007669"/>
    <property type="project" value="TreeGrafter"/>
</dbReference>
<dbReference type="GO" id="GO:0005525">
    <property type="term" value="F:GTP binding"/>
    <property type="evidence" value="ECO:0007669"/>
    <property type="project" value="UniProtKB-UniRule"/>
</dbReference>
<dbReference type="GO" id="GO:0003924">
    <property type="term" value="F:GTPase activity"/>
    <property type="evidence" value="ECO:0007669"/>
    <property type="project" value="UniProtKB-UniRule"/>
</dbReference>
<dbReference type="GO" id="GO:0046872">
    <property type="term" value="F:metal ion binding"/>
    <property type="evidence" value="ECO:0007669"/>
    <property type="project" value="UniProtKB-KW"/>
</dbReference>
<dbReference type="GO" id="GO:0030488">
    <property type="term" value="P:tRNA methylation"/>
    <property type="evidence" value="ECO:0007669"/>
    <property type="project" value="TreeGrafter"/>
</dbReference>
<dbReference type="GO" id="GO:0002098">
    <property type="term" value="P:tRNA wobble uridine modification"/>
    <property type="evidence" value="ECO:0007669"/>
    <property type="project" value="TreeGrafter"/>
</dbReference>
<dbReference type="CDD" id="cd04164">
    <property type="entry name" value="trmE"/>
    <property type="match status" value="1"/>
</dbReference>
<dbReference type="CDD" id="cd14858">
    <property type="entry name" value="TrmE_N"/>
    <property type="match status" value="1"/>
</dbReference>
<dbReference type="Gene3D" id="3.40.50.300">
    <property type="entry name" value="P-loop containing nucleotide triphosphate hydrolases"/>
    <property type="match status" value="1"/>
</dbReference>
<dbReference type="Gene3D" id="3.30.1360.120">
    <property type="entry name" value="Probable tRNA modification gtpase trme, domain 1"/>
    <property type="match status" value="1"/>
</dbReference>
<dbReference type="Gene3D" id="1.20.120.430">
    <property type="entry name" value="tRNA modification GTPase MnmE domain 2"/>
    <property type="match status" value="1"/>
</dbReference>
<dbReference type="HAMAP" id="MF_00379">
    <property type="entry name" value="GTPase_MnmE"/>
    <property type="match status" value="1"/>
</dbReference>
<dbReference type="InterPro" id="IPR031168">
    <property type="entry name" value="G_TrmE"/>
</dbReference>
<dbReference type="InterPro" id="IPR006073">
    <property type="entry name" value="GTP-bd"/>
</dbReference>
<dbReference type="InterPro" id="IPR018948">
    <property type="entry name" value="GTP-bd_TrmE_N"/>
</dbReference>
<dbReference type="InterPro" id="IPR004520">
    <property type="entry name" value="GTPase_MnmE"/>
</dbReference>
<dbReference type="InterPro" id="IPR027368">
    <property type="entry name" value="MnmE_dom2"/>
</dbReference>
<dbReference type="InterPro" id="IPR025867">
    <property type="entry name" value="MnmE_helical"/>
</dbReference>
<dbReference type="InterPro" id="IPR027417">
    <property type="entry name" value="P-loop_NTPase"/>
</dbReference>
<dbReference type="InterPro" id="IPR005225">
    <property type="entry name" value="Small_GTP-bd"/>
</dbReference>
<dbReference type="InterPro" id="IPR027266">
    <property type="entry name" value="TrmE/GcvT_dom1"/>
</dbReference>
<dbReference type="NCBIfam" id="TIGR00450">
    <property type="entry name" value="mnmE_trmE_thdF"/>
    <property type="match status" value="1"/>
</dbReference>
<dbReference type="NCBIfam" id="TIGR00231">
    <property type="entry name" value="small_GTP"/>
    <property type="match status" value="1"/>
</dbReference>
<dbReference type="PANTHER" id="PTHR42714">
    <property type="entry name" value="TRNA MODIFICATION GTPASE GTPBP3"/>
    <property type="match status" value="1"/>
</dbReference>
<dbReference type="PANTHER" id="PTHR42714:SF2">
    <property type="entry name" value="TRNA MODIFICATION GTPASE GTPBP3, MITOCHONDRIAL"/>
    <property type="match status" value="1"/>
</dbReference>
<dbReference type="Pfam" id="PF01926">
    <property type="entry name" value="MMR_HSR1"/>
    <property type="match status" value="1"/>
</dbReference>
<dbReference type="Pfam" id="PF12631">
    <property type="entry name" value="MnmE_helical"/>
    <property type="match status" value="1"/>
</dbReference>
<dbReference type="Pfam" id="PF10396">
    <property type="entry name" value="TrmE_N"/>
    <property type="match status" value="1"/>
</dbReference>
<dbReference type="SUPFAM" id="SSF52540">
    <property type="entry name" value="P-loop containing nucleoside triphosphate hydrolases"/>
    <property type="match status" value="1"/>
</dbReference>
<dbReference type="PROSITE" id="PS51709">
    <property type="entry name" value="G_TRME"/>
    <property type="match status" value="1"/>
</dbReference>
<feature type="chain" id="PRO_0000188861" description="tRNA modification GTPase MnmE">
    <location>
        <begin position="1"/>
        <end position="474"/>
    </location>
</feature>
<feature type="domain" description="TrmE-type G">
    <location>
        <begin position="219"/>
        <end position="386"/>
    </location>
</feature>
<feature type="binding site" evidence="1">
    <location>
        <position position="25"/>
    </location>
    <ligand>
        <name>(6S)-5-formyl-5,6,7,8-tetrahydrofolate</name>
        <dbReference type="ChEBI" id="CHEBI:57457"/>
    </ligand>
</feature>
<feature type="binding site" evidence="1">
    <location>
        <position position="82"/>
    </location>
    <ligand>
        <name>(6S)-5-formyl-5,6,7,8-tetrahydrofolate</name>
        <dbReference type="ChEBI" id="CHEBI:57457"/>
    </ligand>
</feature>
<feature type="binding site" evidence="1">
    <location>
        <position position="123"/>
    </location>
    <ligand>
        <name>(6S)-5-formyl-5,6,7,8-tetrahydrofolate</name>
        <dbReference type="ChEBI" id="CHEBI:57457"/>
    </ligand>
</feature>
<feature type="binding site" evidence="1">
    <location>
        <begin position="229"/>
        <end position="234"/>
    </location>
    <ligand>
        <name>GTP</name>
        <dbReference type="ChEBI" id="CHEBI:37565"/>
    </ligand>
</feature>
<feature type="binding site" evidence="1">
    <location>
        <position position="229"/>
    </location>
    <ligand>
        <name>K(+)</name>
        <dbReference type="ChEBI" id="CHEBI:29103"/>
    </ligand>
</feature>
<feature type="binding site" evidence="1">
    <location>
        <position position="233"/>
    </location>
    <ligand>
        <name>Mg(2+)</name>
        <dbReference type="ChEBI" id="CHEBI:18420"/>
    </ligand>
</feature>
<feature type="binding site" evidence="1">
    <location>
        <begin position="248"/>
        <end position="254"/>
    </location>
    <ligand>
        <name>GTP</name>
        <dbReference type="ChEBI" id="CHEBI:37565"/>
    </ligand>
</feature>
<feature type="binding site" evidence="1">
    <location>
        <position position="248"/>
    </location>
    <ligand>
        <name>K(+)</name>
        <dbReference type="ChEBI" id="CHEBI:29103"/>
    </ligand>
</feature>
<feature type="binding site" evidence="1">
    <location>
        <position position="250"/>
    </location>
    <ligand>
        <name>K(+)</name>
        <dbReference type="ChEBI" id="CHEBI:29103"/>
    </ligand>
</feature>
<feature type="binding site" evidence="1">
    <location>
        <position position="253"/>
    </location>
    <ligand>
        <name>K(+)</name>
        <dbReference type="ChEBI" id="CHEBI:29103"/>
    </ligand>
</feature>
<feature type="binding site" evidence="1">
    <location>
        <position position="254"/>
    </location>
    <ligand>
        <name>Mg(2+)</name>
        <dbReference type="ChEBI" id="CHEBI:18420"/>
    </ligand>
</feature>
<feature type="binding site" evidence="1">
    <location>
        <begin position="273"/>
        <end position="276"/>
    </location>
    <ligand>
        <name>GTP</name>
        <dbReference type="ChEBI" id="CHEBI:37565"/>
    </ligand>
</feature>
<feature type="binding site" evidence="1">
    <location>
        <position position="474"/>
    </location>
    <ligand>
        <name>(6S)-5-formyl-5,6,7,8-tetrahydrofolate</name>
        <dbReference type="ChEBI" id="CHEBI:57457"/>
    </ligand>
</feature>
<evidence type="ECO:0000255" key="1">
    <source>
        <dbReference type="HAMAP-Rule" id="MF_00379"/>
    </source>
</evidence>
<name>MNME_BLOFL</name>
<gene>
    <name evidence="1" type="primary">mnmE</name>
    <name evidence="1" type="synonym">trmE</name>
    <name type="ordered locus">Bfl011</name>
</gene>
<keyword id="KW-0963">Cytoplasm</keyword>
<keyword id="KW-0342">GTP-binding</keyword>
<keyword id="KW-0378">Hydrolase</keyword>
<keyword id="KW-0460">Magnesium</keyword>
<keyword id="KW-0479">Metal-binding</keyword>
<keyword id="KW-0547">Nucleotide-binding</keyword>
<keyword id="KW-0630">Potassium</keyword>
<keyword id="KW-1185">Reference proteome</keyword>
<keyword id="KW-0819">tRNA processing</keyword>
<proteinExistence type="inferred from homology"/>
<sequence>MKNNEIDTIAAISTPIGRGGIGIIRVSGKLVPEVAMKLFNKIPKPRTAEYLTCIDHNGSIMEKVITLFFPEPHSFTGENILEIHGHGGQMILDLLLDRILNISSRIRLANPGEFTERAFLNEKIDLIQAESIADIINATSYQAAKSACNSLQGHFSNQIRIILNKITNFRTYIESTLDFSDQEISDISYQHIYNTLQNIIDNTNQICKLTHSGVLLRDGIKVVIAGKPNAGKSSLFNSLINKDRAIISNISGTTRDILHEYIQLNGIAFHIIDTAGFKKNSTNEIELIGMQKSKYELSKADHILWVIDSTDYSHNNSYNNIINSLKKELSSNNIEAVFITIIRNKSDLSFEHNGIDTTNKYACITLSALLNHGIDLLKKHLYDSAMLQIHKNSNFSSVEENQGNFIARKRHLKILQKVFQYLLSAKTQLQYNMTVNDCFAEDLKKAHEELAQIFGKLTPDDLLEEIFRAFCIGK</sequence>
<reference key="1">
    <citation type="journal article" date="2003" name="Proc. Natl. Acad. Sci. U.S.A.">
        <title>The genome sequence of Blochmannia floridanus: comparative analysis of reduced genomes.</title>
        <authorList>
            <person name="Gil R."/>
            <person name="Silva F.J."/>
            <person name="Zientz E."/>
            <person name="Delmotte F."/>
            <person name="Gonzalez-Candelas F."/>
            <person name="Latorre A."/>
            <person name="Rausell C."/>
            <person name="Kamerbeek J."/>
            <person name="Gadau J."/>
            <person name="Hoelldobler B."/>
            <person name="van Ham R.C.H.J."/>
            <person name="Gross R."/>
            <person name="Moya A."/>
        </authorList>
    </citation>
    <scope>NUCLEOTIDE SEQUENCE [LARGE SCALE GENOMIC DNA]</scope>
</reference>